<protein>
    <recommendedName>
        <fullName evidence="11">Chemerin-like receptor 2</fullName>
    </recommendedName>
    <alternativeName>
        <fullName evidence="13">Chemerin chemokine-like receptor 2</fullName>
    </alternativeName>
    <alternativeName>
        <fullName>Chemokine-like receptor 2</fullName>
    </alternativeName>
    <alternativeName>
        <fullName evidence="10">G-protein coupled receptor 1</fullName>
    </alternativeName>
</protein>
<accession>P46091</accession>
<accession>A5JUU6</accession>
<accession>A8K4L1</accession>
<accession>Q53TR9</accession>
<accession>Q6NVX4</accession>
<keyword id="KW-0002">3D-structure</keyword>
<keyword id="KW-1003">Cell membrane</keyword>
<keyword id="KW-1015">Disulfide bond</keyword>
<keyword id="KW-0297">G-protein coupled receptor</keyword>
<keyword id="KW-0325">Glycoprotein</keyword>
<keyword id="KW-0472">Membrane</keyword>
<keyword id="KW-0675">Receptor</keyword>
<keyword id="KW-1185">Reference proteome</keyword>
<keyword id="KW-0807">Transducer</keyword>
<keyword id="KW-0812">Transmembrane</keyword>
<keyword id="KW-1133">Transmembrane helix</keyword>
<dbReference type="EMBL" id="U13666">
    <property type="protein sequence ID" value="AAA64592.1"/>
    <property type="molecule type" value="Genomic_DNA"/>
</dbReference>
<dbReference type="EMBL" id="EF577403">
    <property type="protein sequence ID" value="ABQ52423.1"/>
    <property type="molecule type" value="mRNA"/>
</dbReference>
<dbReference type="EMBL" id="AK290976">
    <property type="protein sequence ID" value="BAF83665.1"/>
    <property type="molecule type" value="mRNA"/>
</dbReference>
<dbReference type="EMBL" id="AK075130">
    <property type="protein sequence ID" value="BAG52070.1"/>
    <property type="molecule type" value="mRNA"/>
</dbReference>
<dbReference type="EMBL" id="AC007383">
    <property type="protein sequence ID" value="AAY15063.1"/>
    <property type="molecule type" value="Genomic_DNA"/>
</dbReference>
<dbReference type="EMBL" id="CH471063">
    <property type="protein sequence ID" value="EAW70383.1"/>
    <property type="molecule type" value="Genomic_DNA"/>
</dbReference>
<dbReference type="EMBL" id="BC067833">
    <property type="protein sequence ID" value="AAH67833.1"/>
    <property type="molecule type" value="mRNA"/>
</dbReference>
<dbReference type="CCDS" id="CCDS2368.1"/>
<dbReference type="PIR" id="A55733">
    <property type="entry name" value="A55733"/>
</dbReference>
<dbReference type="RefSeq" id="NP_001091669.1">
    <property type="nucleotide sequence ID" value="NM_001098199.2"/>
</dbReference>
<dbReference type="RefSeq" id="NP_001248381.1">
    <property type="nucleotide sequence ID" value="NM_001261452.2"/>
</dbReference>
<dbReference type="RefSeq" id="NP_001248382.1">
    <property type="nucleotide sequence ID" value="NM_001261453.2"/>
</dbReference>
<dbReference type="RefSeq" id="NP_001248383.1">
    <property type="nucleotide sequence ID" value="NM_001261454.1"/>
</dbReference>
<dbReference type="RefSeq" id="NP_001248384.1">
    <property type="nucleotide sequence ID" value="NM_001261455.1"/>
</dbReference>
<dbReference type="RefSeq" id="NP_001376374.1">
    <property type="nucleotide sequence ID" value="NM_001389445.1"/>
</dbReference>
<dbReference type="RefSeq" id="NP_005270.2">
    <property type="nucleotide sequence ID" value="NM_005279.3"/>
</dbReference>
<dbReference type="RefSeq" id="XP_005246528.1">
    <property type="nucleotide sequence ID" value="XM_005246471.2"/>
</dbReference>
<dbReference type="RefSeq" id="XP_016859321.1">
    <property type="nucleotide sequence ID" value="XM_017003832.1"/>
</dbReference>
<dbReference type="RefSeq" id="XP_047299924.1">
    <property type="nucleotide sequence ID" value="XM_047443968.1"/>
</dbReference>
<dbReference type="RefSeq" id="XP_054187955.1">
    <property type="nucleotide sequence ID" value="XM_054331980.1"/>
</dbReference>
<dbReference type="RefSeq" id="XP_054187956.1">
    <property type="nucleotide sequence ID" value="XM_054331981.1"/>
</dbReference>
<dbReference type="RefSeq" id="XP_054197395.1">
    <property type="nucleotide sequence ID" value="XM_054341420.1"/>
</dbReference>
<dbReference type="RefSeq" id="XP_054197396.1">
    <property type="nucleotide sequence ID" value="XM_054341421.1"/>
</dbReference>
<dbReference type="PDB" id="8JJP">
    <property type="method" value="EM"/>
    <property type="resolution" value="2.90 A"/>
    <property type="chains" value="A=35-326"/>
</dbReference>
<dbReference type="PDB" id="8XGM">
    <property type="method" value="EM"/>
    <property type="resolution" value="3.29 A"/>
    <property type="chains" value="A=14-319"/>
</dbReference>
<dbReference type="PDB" id="9L3Y">
    <property type="method" value="EM"/>
    <property type="resolution" value="3.60 A"/>
    <property type="chains" value="R=1-322"/>
</dbReference>
<dbReference type="PDBsum" id="8JJP"/>
<dbReference type="PDBsum" id="8XGM"/>
<dbReference type="PDBsum" id="9L3Y"/>
<dbReference type="EMDB" id="EMD-36364"/>
<dbReference type="EMDB" id="EMD-38328"/>
<dbReference type="EMDB" id="EMD-62798"/>
<dbReference type="SMR" id="P46091"/>
<dbReference type="FunCoup" id="P46091">
    <property type="interactions" value="389"/>
</dbReference>
<dbReference type="IntAct" id="P46091">
    <property type="interactions" value="1"/>
</dbReference>
<dbReference type="MINT" id="P46091"/>
<dbReference type="STRING" id="9606.ENSP00000480405"/>
<dbReference type="ChEMBL" id="CHEMBL4523229"/>
<dbReference type="GuidetoPHARMACOLOGY" id="82"/>
<dbReference type="GlyCosmos" id="P46091">
    <property type="glycosylation" value="1 site, No reported glycans"/>
</dbReference>
<dbReference type="GlyGen" id="P46091">
    <property type="glycosylation" value="2 sites, 1 N-linked glycan (1 site)"/>
</dbReference>
<dbReference type="iPTMnet" id="P46091"/>
<dbReference type="PhosphoSitePlus" id="P46091"/>
<dbReference type="BioMuta" id="GPR1"/>
<dbReference type="DMDM" id="82654939"/>
<dbReference type="PaxDb" id="9606-ENSP00000480405"/>
<dbReference type="PeptideAtlas" id="P46091"/>
<dbReference type="ProteomicsDB" id="55717"/>
<dbReference type="Antibodypedia" id="1410">
    <property type="antibodies" value="229 antibodies from 31 providers"/>
</dbReference>
<dbReference type="DNASU" id="2825"/>
<dbReference type="Ensembl" id="ENST00000407325.6">
    <property type="protein sequence ID" value="ENSP00000384345.2"/>
    <property type="gene ID" value="ENSG00000183671.13"/>
</dbReference>
<dbReference type="Ensembl" id="ENST00000437420.5">
    <property type="protein sequence ID" value="ENSP00000397535.1"/>
    <property type="gene ID" value="ENSG00000183671.13"/>
</dbReference>
<dbReference type="Ensembl" id="ENST00000621141.5">
    <property type="protein sequence ID" value="ENSP00000483003.1"/>
    <property type="gene ID" value="ENSG00000183671.13"/>
</dbReference>
<dbReference type="Ensembl" id="ENST00000636284.2">
    <property type="protein sequence ID" value="ENSP00000489693.2"/>
    <property type="gene ID" value="ENSG00000283448.2"/>
</dbReference>
<dbReference type="Ensembl" id="ENST00000637075.1">
    <property type="protein sequence ID" value="ENSP00000490813.1"/>
    <property type="gene ID" value="ENSG00000283448.2"/>
</dbReference>
<dbReference type="Ensembl" id="ENST00000638116.1">
    <property type="protein sequence ID" value="ENSP00000489673.1"/>
    <property type="gene ID" value="ENSG00000283448.2"/>
</dbReference>
<dbReference type="GeneID" id="2825"/>
<dbReference type="KEGG" id="hsa:2825"/>
<dbReference type="MANE-Select" id="ENST00000621141.5">
    <property type="protein sequence ID" value="ENSP00000483003.1"/>
    <property type="RefSeq nucleotide sequence ID" value="NM_001389445.1"/>
    <property type="RefSeq protein sequence ID" value="NP_001376374.1"/>
</dbReference>
<dbReference type="UCSC" id="uc002vbl.6">
    <property type="organism name" value="human"/>
</dbReference>
<dbReference type="AGR" id="HGNC:4463"/>
<dbReference type="CTD" id="2825"/>
<dbReference type="DisGeNET" id="2825"/>
<dbReference type="GeneCards" id="CMKLR2"/>
<dbReference type="HGNC" id="HGNC:4463">
    <property type="gene designation" value="CMKLR2"/>
</dbReference>
<dbReference type="HPA" id="ENSG00000183671">
    <property type="expression patterns" value="Tissue enhanced (choroid)"/>
</dbReference>
<dbReference type="MIM" id="600239">
    <property type="type" value="gene"/>
</dbReference>
<dbReference type="neXtProt" id="NX_P46091"/>
<dbReference type="OpenTargets" id="ENSG00000183671"/>
<dbReference type="PharmGKB" id="PA28846"/>
<dbReference type="VEuPathDB" id="HostDB:ENSG00000183671"/>
<dbReference type="eggNOG" id="KOG3656">
    <property type="taxonomic scope" value="Eukaryota"/>
</dbReference>
<dbReference type="GeneTree" id="ENSGT00940000160642"/>
<dbReference type="HOGENOM" id="CLU_009579_8_0_1"/>
<dbReference type="InParanoid" id="P46091"/>
<dbReference type="OMA" id="ISSKHFW"/>
<dbReference type="OrthoDB" id="9088at9604"/>
<dbReference type="PAN-GO" id="P46091">
    <property type="GO annotations" value="5 GO annotations based on evolutionary models"/>
</dbReference>
<dbReference type="PhylomeDB" id="P46091"/>
<dbReference type="TreeFam" id="TF330976"/>
<dbReference type="PathwayCommons" id="P46091"/>
<dbReference type="SignaLink" id="P46091"/>
<dbReference type="BioGRID-ORCS" id="2825">
    <property type="hits" value="9 hits in 1138 CRISPR screens"/>
</dbReference>
<dbReference type="GeneWiki" id="GPR1"/>
<dbReference type="GenomeRNAi" id="2825"/>
<dbReference type="Pharos" id="P46091">
    <property type="development level" value="Tchem"/>
</dbReference>
<dbReference type="PRO" id="PR:P46091"/>
<dbReference type="Proteomes" id="UP000005640">
    <property type="component" value="Chromosome 2"/>
</dbReference>
<dbReference type="RNAct" id="P46091">
    <property type="molecule type" value="protein"/>
</dbReference>
<dbReference type="Bgee" id="ENSG00000183671">
    <property type="expression patterns" value="Expressed in placenta and 93 other cell types or tissues"/>
</dbReference>
<dbReference type="ExpressionAtlas" id="P46091">
    <property type="expression patterns" value="baseline and differential"/>
</dbReference>
<dbReference type="GO" id="GO:0043231">
    <property type="term" value="C:intracellular membrane-bounded organelle"/>
    <property type="evidence" value="ECO:0000314"/>
    <property type="project" value="HPA"/>
</dbReference>
<dbReference type="GO" id="GO:0043005">
    <property type="term" value="C:neuron projection"/>
    <property type="evidence" value="ECO:0000318"/>
    <property type="project" value="GO_Central"/>
</dbReference>
<dbReference type="GO" id="GO:0005654">
    <property type="term" value="C:nucleoplasm"/>
    <property type="evidence" value="ECO:0000314"/>
    <property type="project" value="HPA"/>
</dbReference>
<dbReference type="GO" id="GO:0005886">
    <property type="term" value="C:plasma membrane"/>
    <property type="evidence" value="ECO:0000314"/>
    <property type="project" value="UniProtKB"/>
</dbReference>
<dbReference type="GO" id="GO:0097004">
    <property type="term" value="F:adipokinetic hormone binding"/>
    <property type="evidence" value="ECO:0000314"/>
    <property type="project" value="UniProtKB"/>
</dbReference>
<dbReference type="GO" id="GO:0097003">
    <property type="term" value="F:adipokinetic hormone receptor activity"/>
    <property type="evidence" value="ECO:0000314"/>
    <property type="project" value="UniProtKB"/>
</dbReference>
<dbReference type="GO" id="GO:0004930">
    <property type="term" value="F:G protein-coupled receptor activity"/>
    <property type="evidence" value="ECO:0000318"/>
    <property type="project" value="GO_Central"/>
</dbReference>
<dbReference type="GO" id="GO:0042923">
    <property type="term" value="F:neuropeptide binding"/>
    <property type="evidence" value="ECO:0000318"/>
    <property type="project" value="GO_Central"/>
</dbReference>
<dbReference type="GO" id="GO:0007186">
    <property type="term" value="P:G protein-coupled receptor signaling pathway"/>
    <property type="evidence" value="ECO:0000304"/>
    <property type="project" value="ProtInc"/>
</dbReference>
<dbReference type="GO" id="GO:0042593">
    <property type="term" value="P:glucose homeostasis"/>
    <property type="evidence" value="ECO:0000250"/>
    <property type="project" value="UniProtKB"/>
</dbReference>
<dbReference type="GO" id="GO:0007218">
    <property type="term" value="P:neuropeptide signaling pathway"/>
    <property type="evidence" value="ECO:0000318"/>
    <property type="project" value="GO_Central"/>
</dbReference>
<dbReference type="CDD" id="cd15119">
    <property type="entry name" value="7tmA_GPR1"/>
    <property type="match status" value="1"/>
</dbReference>
<dbReference type="FunFam" id="1.20.1070.10:FF:000034">
    <property type="entry name" value="G-protein coupled receptor 1"/>
    <property type="match status" value="1"/>
</dbReference>
<dbReference type="Gene3D" id="1.20.1070.10">
    <property type="entry name" value="Rhodopsin 7-helix transmembrane proteins"/>
    <property type="match status" value="1"/>
</dbReference>
<dbReference type="InterPro" id="IPR002275">
    <property type="entry name" value="CML2"/>
</dbReference>
<dbReference type="InterPro" id="IPR000826">
    <property type="entry name" value="Formyl_rcpt-rel"/>
</dbReference>
<dbReference type="InterPro" id="IPR000276">
    <property type="entry name" value="GPCR_Rhodpsn"/>
</dbReference>
<dbReference type="InterPro" id="IPR017452">
    <property type="entry name" value="GPCR_Rhodpsn_7TM"/>
</dbReference>
<dbReference type="PANTHER" id="PTHR24225:SF74">
    <property type="entry name" value="CHEMOKINE-LIKE RECEPTOR 1"/>
    <property type="match status" value="1"/>
</dbReference>
<dbReference type="PANTHER" id="PTHR24225">
    <property type="entry name" value="CHEMOTACTIC RECEPTOR"/>
    <property type="match status" value="1"/>
</dbReference>
<dbReference type="Pfam" id="PF00001">
    <property type="entry name" value="7tm_1"/>
    <property type="match status" value="1"/>
</dbReference>
<dbReference type="PRINTS" id="PR00237">
    <property type="entry name" value="GPCRRHODOPSN"/>
</dbReference>
<dbReference type="PRINTS" id="PR01146">
    <property type="entry name" value="GPR1ORPHANR"/>
</dbReference>
<dbReference type="SUPFAM" id="SSF81321">
    <property type="entry name" value="Family A G protein-coupled receptor-like"/>
    <property type="match status" value="1"/>
</dbReference>
<dbReference type="PROSITE" id="PS50262">
    <property type="entry name" value="G_PROTEIN_RECEP_F1_2"/>
    <property type="match status" value="1"/>
</dbReference>
<comment type="function">
    <text evidence="1 8 9">Receptor for chemoattractant adipokine chemerin/RARRES2 suggesting a role for this receptor in the regulation of inflammation and energy homesotasis (PubMed:18165312, PubMed:27716822). Signals mainly via beta-arrestin pathway. Binding of RARRES2 activates weakly G proteins, calcium mobilization and MAPK1/MAPK3 (ERK1/2) phosphorylation too (PubMed:27716822). Also acts as a receptor for TAFA1, mediates its effects on neuronal stem-cell proliferation and differentiation via the activation of ROCK/ERK and ROCK/STAT3 signaling pathway (By similarity).</text>
</comment>
<comment type="function">
    <text evidence="4">(Microbial infection) Coreceptor for HIV-1.</text>
</comment>
<comment type="interaction">
    <interactant intactId="EBI-11477864">
        <id>P46091</id>
    </interactant>
    <interactant intactId="EBI-11477759">
        <id>PRO_0000041304</id>
        <dbReference type="UniProtKB" id="P08563"/>
    </interactant>
    <organismsDiffer>true</organismsDiffer>
    <experiments>2</experiments>
</comment>
<comment type="subcellular location">
    <subcellularLocation>
        <location evidence="9">Cell membrane</location>
        <topology evidence="2">Multi-pass membrane protein</topology>
    </subcellularLocation>
    <text evidence="1 9">Internalizes in presence of its ligand, TAFA1 (By similarity). Internalizes efficiently in response to RARRES2 (PubMed:27716822).</text>
</comment>
<comment type="tissue specificity">
    <text>Expressed in hippocampus.</text>
</comment>
<comment type="similarity">
    <text evidence="12">Belongs to the chemokine-like receptor (CMKLR) family.</text>
</comment>
<organism>
    <name type="scientific">Homo sapiens</name>
    <name type="common">Human</name>
    <dbReference type="NCBI Taxonomy" id="9606"/>
    <lineage>
        <taxon>Eukaryota</taxon>
        <taxon>Metazoa</taxon>
        <taxon>Chordata</taxon>
        <taxon>Craniata</taxon>
        <taxon>Vertebrata</taxon>
        <taxon>Euteleostomi</taxon>
        <taxon>Mammalia</taxon>
        <taxon>Eutheria</taxon>
        <taxon>Euarchontoglires</taxon>
        <taxon>Primates</taxon>
        <taxon>Haplorrhini</taxon>
        <taxon>Catarrhini</taxon>
        <taxon>Hominidae</taxon>
        <taxon>Homo</taxon>
    </lineage>
</organism>
<evidence type="ECO:0000250" key="1">
    <source>
        <dbReference type="UniProtKB" id="Q8K087"/>
    </source>
</evidence>
<evidence type="ECO:0000255" key="2"/>
<evidence type="ECO:0000255" key="3">
    <source>
        <dbReference type="PROSITE-ProRule" id="PRU00521"/>
    </source>
</evidence>
<evidence type="ECO:0000269" key="4">
    <source>
    </source>
</evidence>
<evidence type="ECO:0000269" key="5">
    <source>
    </source>
</evidence>
<evidence type="ECO:0000269" key="6">
    <source>
    </source>
</evidence>
<evidence type="ECO:0000269" key="7">
    <source>
    </source>
</evidence>
<evidence type="ECO:0000269" key="8">
    <source>
    </source>
</evidence>
<evidence type="ECO:0000269" key="9">
    <source>
    </source>
</evidence>
<evidence type="ECO:0000303" key="10">
    <source>
    </source>
</evidence>
<evidence type="ECO:0000303" key="11">
    <source>
    </source>
</evidence>
<evidence type="ECO:0000305" key="12"/>
<evidence type="ECO:0000312" key="13">
    <source>
        <dbReference type="HGNC" id="HGNC:4463"/>
    </source>
</evidence>
<evidence type="ECO:0007829" key="14">
    <source>
        <dbReference type="PDB" id="8JJP"/>
    </source>
</evidence>
<evidence type="ECO:0007829" key="15">
    <source>
        <dbReference type="PDB" id="8XGM"/>
    </source>
</evidence>
<sequence>MEDLEETLFEEFENYSYDLDYYSLESDLEEKVQLGVVHWVSLVLYCLAFVLGIPGNAIVIWFTGFKWKKTVTTLWFLNLAIADFIFLLFLPLYISYVAMNFHWPFGIWLCKANSFTAQLNMFASVFFLTVISLDHYIHLIHPVLSHRHRTLKNSLIVIIFIWLLASLIGGPALYFRDTVEFNNHTLCYNNFQKHDPDLTLIRHHVLTWVKFIIGYLFPLLTMSICYLCLIFKVKKRSILISSRHFWTILVVVVAFVVCWTPYHLFSIWELTIHHNSYSHHVMQAGIPLSTGLAFLNSCLNPILYVLISKKFQARFRSSVAEILKYTLWEVSCSGTVSEQLRNSETKNLCLLETAQ</sequence>
<feature type="chain" id="PRO_0000069505" description="Chemerin-like receptor 2">
    <location>
        <begin position="1"/>
        <end position="355"/>
    </location>
</feature>
<feature type="topological domain" description="Extracellular" evidence="2">
    <location>
        <begin position="1"/>
        <end position="41"/>
    </location>
</feature>
<feature type="transmembrane region" description="Helical; Name=1" evidence="2">
    <location>
        <begin position="42"/>
        <end position="62"/>
    </location>
</feature>
<feature type="topological domain" description="Cytoplasmic" evidence="2">
    <location>
        <begin position="63"/>
        <end position="73"/>
    </location>
</feature>
<feature type="transmembrane region" description="Helical; Name=2" evidence="2">
    <location>
        <begin position="74"/>
        <end position="94"/>
    </location>
</feature>
<feature type="topological domain" description="Extracellular" evidence="2">
    <location>
        <begin position="95"/>
        <end position="112"/>
    </location>
</feature>
<feature type="transmembrane region" description="Helical; Name=3" evidence="2">
    <location>
        <begin position="113"/>
        <end position="133"/>
    </location>
</feature>
<feature type="topological domain" description="Cytoplasmic" evidence="2">
    <location>
        <begin position="134"/>
        <end position="154"/>
    </location>
</feature>
<feature type="transmembrane region" description="Helical; Name=4" evidence="2">
    <location>
        <begin position="155"/>
        <end position="175"/>
    </location>
</feature>
<feature type="topological domain" description="Extracellular" evidence="2">
    <location>
        <begin position="176"/>
        <end position="210"/>
    </location>
</feature>
<feature type="transmembrane region" description="Helical; Name=5" evidence="2">
    <location>
        <begin position="211"/>
        <end position="231"/>
    </location>
</feature>
<feature type="topological domain" description="Cytoplasmic" evidence="2">
    <location>
        <begin position="232"/>
        <end position="247"/>
    </location>
</feature>
<feature type="transmembrane region" description="Helical; Name=6" evidence="2">
    <location>
        <begin position="248"/>
        <end position="268"/>
    </location>
</feature>
<feature type="topological domain" description="Extracellular" evidence="2">
    <location>
        <begin position="269"/>
        <end position="286"/>
    </location>
</feature>
<feature type="transmembrane region" description="Helical; Name=7" evidence="2">
    <location>
        <begin position="287"/>
        <end position="307"/>
    </location>
</feature>
<feature type="topological domain" description="Cytoplasmic" evidence="2">
    <location>
        <begin position="308"/>
        <end position="355"/>
    </location>
</feature>
<feature type="glycosylation site" description="N-linked (GlcNAc...) asparagine" evidence="2">
    <location>
        <position position="14"/>
    </location>
</feature>
<feature type="disulfide bond" evidence="3">
    <location>
        <begin position="110"/>
        <end position="187"/>
    </location>
</feature>
<feature type="sequence variant" id="VAR_023839" description="In dbSNP:rs3732083." evidence="5 6 7">
    <original>I</original>
    <variation>V</variation>
    <location>
        <position position="307"/>
    </location>
</feature>
<feature type="sequence conflict" description="In Ref. 1; AAA64592." evidence="12" ref="1">
    <original>F</original>
    <variation>L</variation>
    <location>
        <position position="65"/>
    </location>
</feature>
<feature type="sequence conflict" description="In Ref. 1; AAA64592." evidence="12" ref="1">
    <original>SI</original>
    <variation>TV</variation>
    <location>
        <begin position="237"/>
        <end position="238"/>
    </location>
</feature>
<feature type="strand" evidence="15">
    <location>
        <begin position="25"/>
        <end position="29"/>
    </location>
</feature>
<feature type="helix" evidence="14">
    <location>
        <begin position="36"/>
        <end position="64"/>
    </location>
</feature>
<feature type="helix" evidence="14">
    <location>
        <begin position="72"/>
        <end position="88"/>
    </location>
</feature>
<feature type="helix" evidence="14">
    <location>
        <begin position="90"/>
        <end position="98"/>
    </location>
</feature>
<feature type="helix" evidence="14">
    <location>
        <begin position="108"/>
        <end position="140"/>
    </location>
</feature>
<feature type="turn" evidence="14">
    <location>
        <begin position="142"/>
        <end position="146"/>
    </location>
</feature>
<feature type="helix" evidence="14">
    <location>
        <begin position="151"/>
        <end position="175"/>
    </location>
</feature>
<feature type="strand" evidence="14">
    <location>
        <begin position="176"/>
        <end position="181"/>
    </location>
</feature>
<feature type="strand" evidence="14">
    <location>
        <begin position="184"/>
        <end position="189"/>
    </location>
</feature>
<feature type="strand" evidence="15">
    <location>
        <begin position="196"/>
        <end position="198"/>
    </location>
</feature>
<feature type="helix" evidence="14">
    <location>
        <begin position="199"/>
        <end position="214"/>
    </location>
</feature>
<feature type="helix" evidence="14">
    <location>
        <begin position="216"/>
        <end position="234"/>
    </location>
</feature>
<feature type="turn" evidence="14">
    <location>
        <begin position="235"/>
        <end position="237"/>
    </location>
</feature>
<feature type="helix" evidence="14">
    <location>
        <begin position="242"/>
        <end position="267"/>
    </location>
</feature>
<feature type="turn" evidence="14">
    <location>
        <begin position="268"/>
        <end position="274"/>
    </location>
</feature>
<feature type="helix" evidence="14">
    <location>
        <begin position="280"/>
        <end position="303"/>
    </location>
</feature>
<feature type="strand" evidence="14">
    <location>
        <begin position="305"/>
        <end position="308"/>
    </location>
</feature>
<feature type="helix" evidence="14">
    <location>
        <begin position="309"/>
        <end position="324"/>
    </location>
</feature>
<gene>
    <name evidence="13" type="primary">CMKLR2</name>
    <name evidence="10" type="synonym">GPR1</name>
</gene>
<proteinExistence type="evidence at protein level"/>
<reference key="1">
    <citation type="journal article" date="1994" name="Genomics">
        <title>Cloning of human genes encoding novel G protein-coupled receptors.</title>
        <authorList>
            <person name="Marchese A."/>
            <person name="Docherty J.M."/>
            <person name="Nguyen T."/>
            <person name="Heiber M."/>
            <person name="Cheng R."/>
            <person name="Heng H.H.Q."/>
            <person name="Tsui L.-C."/>
            <person name="Shi X."/>
            <person name="George S.R."/>
            <person name="O'Dowd B.F."/>
        </authorList>
    </citation>
    <scope>NUCLEOTIDE SEQUENCE [GENOMIC DNA]</scope>
</reference>
<reference key="2">
    <citation type="submission" date="2007-04" db="EMBL/GenBank/DDBJ databases">
        <authorList>
            <person name="Martin A.L."/>
            <person name="Kaighin V.A."/>
            <person name="Aronstam R.S."/>
        </authorList>
    </citation>
    <scope>NUCLEOTIDE SEQUENCE [MRNA]</scope>
    <source>
        <tissue>Hippocampus</tissue>
    </source>
</reference>
<reference key="3">
    <citation type="journal article" date="2004" name="Nat. Genet.">
        <title>Complete sequencing and characterization of 21,243 full-length human cDNAs.</title>
        <authorList>
            <person name="Ota T."/>
            <person name="Suzuki Y."/>
            <person name="Nishikawa T."/>
            <person name="Otsuki T."/>
            <person name="Sugiyama T."/>
            <person name="Irie R."/>
            <person name="Wakamatsu A."/>
            <person name="Hayashi K."/>
            <person name="Sato H."/>
            <person name="Nagai K."/>
            <person name="Kimura K."/>
            <person name="Makita H."/>
            <person name="Sekine M."/>
            <person name="Obayashi M."/>
            <person name="Nishi T."/>
            <person name="Shibahara T."/>
            <person name="Tanaka T."/>
            <person name="Ishii S."/>
            <person name="Yamamoto J."/>
            <person name="Saito K."/>
            <person name="Kawai Y."/>
            <person name="Isono Y."/>
            <person name="Nakamura Y."/>
            <person name="Nagahari K."/>
            <person name="Murakami K."/>
            <person name="Yasuda T."/>
            <person name="Iwayanagi T."/>
            <person name="Wagatsuma M."/>
            <person name="Shiratori A."/>
            <person name="Sudo H."/>
            <person name="Hosoiri T."/>
            <person name="Kaku Y."/>
            <person name="Kodaira H."/>
            <person name="Kondo H."/>
            <person name="Sugawara M."/>
            <person name="Takahashi M."/>
            <person name="Kanda K."/>
            <person name="Yokoi T."/>
            <person name="Furuya T."/>
            <person name="Kikkawa E."/>
            <person name="Omura Y."/>
            <person name="Abe K."/>
            <person name="Kamihara K."/>
            <person name="Katsuta N."/>
            <person name="Sato K."/>
            <person name="Tanikawa M."/>
            <person name="Yamazaki M."/>
            <person name="Ninomiya K."/>
            <person name="Ishibashi T."/>
            <person name="Yamashita H."/>
            <person name="Murakawa K."/>
            <person name="Fujimori K."/>
            <person name="Tanai H."/>
            <person name="Kimata M."/>
            <person name="Watanabe M."/>
            <person name="Hiraoka S."/>
            <person name="Chiba Y."/>
            <person name="Ishida S."/>
            <person name="Ono Y."/>
            <person name="Takiguchi S."/>
            <person name="Watanabe S."/>
            <person name="Yosida M."/>
            <person name="Hotuta T."/>
            <person name="Kusano J."/>
            <person name="Kanehori K."/>
            <person name="Takahashi-Fujii A."/>
            <person name="Hara H."/>
            <person name="Tanase T.-O."/>
            <person name="Nomura Y."/>
            <person name="Togiya S."/>
            <person name="Komai F."/>
            <person name="Hara R."/>
            <person name="Takeuchi K."/>
            <person name="Arita M."/>
            <person name="Imose N."/>
            <person name="Musashino K."/>
            <person name="Yuuki H."/>
            <person name="Oshima A."/>
            <person name="Sasaki N."/>
            <person name="Aotsuka S."/>
            <person name="Yoshikawa Y."/>
            <person name="Matsunawa H."/>
            <person name="Ichihara T."/>
            <person name="Shiohata N."/>
            <person name="Sano S."/>
            <person name="Moriya S."/>
            <person name="Momiyama H."/>
            <person name="Satoh N."/>
            <person name="Takami S."/>
            <person name="Terashima Y."/>
            <person name="Suzuki O."/>
            <person name="Nakagawa S."/>
            <person name="Senoh A."/>
            <person name="Mizoguchi H."/>
            <person name="Goto Y."/>
            <person name="Shimizu F."/>
            <person name="Wakebe H."/>
            <person name="Hishigaki H."/>
            <person name="Watanabe T."/>
            <person name="Sugiyama A."/>
            <person name="Takemoto M."/>
            <person name="Kawakami B."/>
            <person name="Yamazaki M."/>
            <person name="Watanabe K."/>
            <person name="Kumagai A."/>
            <person name="Itakura S."/>
            <person name="Fukuzumi Y."/>
            <person name="Fujimori Y."/>
            <person name="Komiyama M."/>
            <person name="Tashiro H."/>
            <person name="Tanigami A."/>
            <person name="Fujiwara T."/>
            <person name="Ono T."/>
            <person name="Yamada K."/>
            <person name="Fujii Y."/>
            <person name="Ozaki K."/>
            <person name="Hirao M."/>
            <person name="Ohmori Y."/>
            <person name="Kawabata A."/>
            <person name="Hikiji T."/>
            <person name="Kobatake N."/>
            <person name="Inagaki H."/>
            <person name="Ikema Y."/>
            <person name="Okamoto S."/>
            <person name="Okitani R."/>
            <person name="Kawakami T."/>
            <person name="Noguchi S."/>
            <person name="Itoh T."/>
            <person name="Shigeta K."/>
            <person name="Senba T."/>
            <person name="Matsumura K."/>
            <person name="Nakajima Y."/>
            <person name="Mizuno T."/>
            <person name="Morinaga M."/>
            <person name="Sasaki M."/>
            <person name="Togashi T."/>
            <person name="Oyama M."/>
            <person name="Hata H."/>
            <person name="Watanabe M."/>
            <person name="Komatsu T."/>
            <person name="Mizushima-Sugano J."/>
            <person name="Satoh T."/>
            <person name="Shirai Y."/>
            <person name="Takahashi Y."/>
            <person name="Nakagawa K."/>
            <person name="Okumura K."/>
            <person name="Nagase T."/>
            <person name="Nomura N."/>
            <person name="Kikuchi H."/>
            <person name="Masuho Y."/>
            <person name="Yamashita R."/>
            <person name="Nakai K."/>
            <person name="Yada T."/>
            <person name="Nakamura Y."/>
            <person name="Ohara O."/>
            <person name="Isogai T."/>
            <person name="Sugano S."/>
        </authorList>
    </citation>
    <scope>NUCLEOTIDE SEQUENCE [LARGE SCALE MRNA]</scope>
    <scope>VARIANT VAL-307</scope>
</reference>
<reference key="4">
    <citation type="journal article" date="2005" name="DNA Res.">
        <title>Signal sequence and keyword trap in silico for selection of full-length human cDNAs encoding secretion or membrane proteins from oligo-capped cDNA libraries.</title>
        <authorList>
            <person name="Otsuki T."/>
            <person name="Ota T."/>
            <person name="Nishikawa T."/>
            <person name="Hayashi K."/>
            <person name="Suzuki Y."/>
            <person name="Yamamoto J."/>
            <person name="Wakamatsu A."/>
            <person name="Kimura K."/>
            <person name="Sakamoto K."/>
            <person name="Hatano N."/>
            <person name="Kawai Y."/>
            <person name="Ishii S."/>
            <person name="Saito K."/>
            <person name="Kojima S."/>
            <person name="Sugiyama T."/>
            <person name="Ono T."/>
            <person name="Okano K."/>
            <person name="Yoshikawa Y."/>
            <person name="Aotsuka S."/>
            <person name="Sasaki N."/>
            <person name="Hattori A."/>
            <person name="Okumura K."/>
            <person name="Nagai K."/>
            <person name="Sugano S."/>
            <person name="Isogai T."/>
        </authorList>
    </citation>
    <scope>NUCLEOTIDE SEQUENCE [LARGE SCALE MRNA]</scope>
    <scope>VARIANT VAL-307</scope>
    <source>
        <tissue>Placenta</tissue>
    </source>
</reference>
<reference key="5">
    <citation type="journal article" date="2005" name="Nature">
        <title>Generation and annotation of the DNA sequences of human chromosomes 2 and 4.</title>
        <authorList>
            <person name="Hillier L.W."/>
            <person name="Graves T.A."/>
            <person name="Fulton R.S."/>
            <person name="Fulton L.A."/>
            <person name="Pepin K.H."/>
            <person name="Minx P."/>
            <person name="Wagner-McPherson C."/>
            <person name="Layman D."/>
            <person name="Wylie K."/>
            <person name="Sekhon M."/>
            <person name="Becker M.C."/>
            <person name="Fewell G.A."/>
            <person name="Delehaunty K.D."/>
            <person name="Miner T.L."/>
            <person name="Nash W.E."/>
            <person name="Kremitzki C."/>
            <person name="Oddy L."/>
            <person name="Du H."/>
            <person name="Sun H."/>
            <person name="Bradshaw-Cordum H."/>
            <person name="Ali J."/>
            <person name="Carter J."/>
            <person name="Cordes M."/>
            <person name="Harris A."/>
            <person name="Isak A."/>
            <person name="van Brunt A."/>
            <person name="Nguyen C."/>
            <person name="Du F."/>
            <person name="Courtney L."/>
            <person name="Kalicki J."/>
            <person name="Ozersky P."/>
            <person name="Abbott S."/>
            <person name="Armstrong J."/>
            <person name="Belter E.A."/>
            <person name="Caruso L."/>
            <person name="Cedroni M."/>
            <person name="Cotton M."/>
            <person name="Davidson T."/>
            <person name="Desai A."/>
            <person name="Elliott G."/>
            <person name="Erb T."/>
            <person name="Fronick C."/>
            <person name="Gaige T."/>
            <person name="Haakenson W."/>
            <person name="Haglund K."/>
            <person name="Holmes A."/>
            <person name="Harkins R."/>
            <person name="Kim K."/>
            <person name="Kruchowski S.S."/>
            <person name="Strong C.M."/>
            <person name="Grewal N."/>
            <person name="Goyea E."/>
            <person name="Hou S."/>
            <person name="Levy A."/>
            <person name="Martinka S."/>
            <person name="Mead K."/>
            <person name="McLellan M.D."/>
            <person name="Meyer R."/>
            <person name="Randall-Maher J."/>
            <person name="Tomlinson C."/>
            <person name="Dauphin-Kohlberg S."/>
            <person name="Kozlowicz-Reilly A."/>
            <person name="Shah N."/>
            <person name="Swearengen-Shahid S."/>
            <person name="Snider J."/>
            <person name="Strong J.T."/>
            <person name="Thompson J."/>
            <person name="Yoakum M."/>
            <person name="Leonard S."/>
            <person name="Pearman C."/>
            <person name="Trani L."/>
            <person name="Radionenko M."/>
            <person name="Waligorski J.E."/>
            <person name="Wang C."/>
            <person name="Rock S.M."/>
            <person name="Tin-Wollam A.-M."/>
            <person name="Maupin R."/>
            <person name="Latreille P."/>
            <person name="Wendl M.C."/>
            <person name="Yang S.-P."/>
            <person name="Pohl C."/>
            <person name="Wallis J.W."/>
            <person name="Spieth J."/>
            <person name="Bieri T.A."/>
            <person name="Berkowicz N."/>
            <person name="Nelson J.O."/>
            <person name="Osborne J."/>
            <person name="Ding L."/>
            <person name="Meyer R."/>
            <person name="Sabo A."/>
            <person name="Shotland Y."/>
            <person name="Sinha P."/>
            <person name="Wohldmann P.E."/>
            <person name="Cook L.L."/>
            <person name="Hickenbotham M.T."/>
            <person name="Eldred J."/>
            <person name="Williams D."/>
            <person name="Jones T.A."/>
            <person name="She X."/>
            <person name="Ciccarelli F.D."/>
            <person name="Izaurralde E."/>
            <person name="Taylor J."/>
            <person name="Schmutz J."/>
            <person name="Myers R.M."/>
            <person name="Cox D.R."/>
            <person name="Huang X."/>
            <person name="McPherson J.D."/>
            <person name="Mardis E.R."/>
            <person name="Clifton S.W."/>
            <person name="Warren W.C."/>
            <person name="Chinwalla A.T."/>
            <person name="Eddy S.R."/>
            <person name="Marra M.A."/>
            <person name="Ovcharenko I."/>
            <person name="Furey T.S."/>
            <person name="Miller W."/>
            <person name="Eichler E.E."/>
            <person name="Bork P."/>
            <person name="Suyama M."/>
            <person name="Torrents D."/>
            <person name="Waterston R.H."/>
            <person name="Wilson R.K."/>
        </authorList>
    </citation>
    <scope>NUCLEOTIDE SEQUENCE [LARGE SCALE GENOMIC DNA]</scope>
</reference>
<reference key="6">
    <citation type="submission" date="2005-07" db="EMBL/GenBank/DDBJ databases">
        <authorList>
            <person name="Mural R.J."/>
            <person name="Istrail S."/>
            <person name="Sutton G.G."/>
            <person name="Florea L."/>
            <person name="Halpern A.L."/>
            <person name="Mobarry C.M."/>
            <person name="Lippert R."/>
            <person name="Walenz B."/>
            <person name="Shatkay H."/>
            <person name="Dew I."/>
            <person name="Miller J.R."/>
            <person name="Flanigan M.J."/>
            <person name="Edwards N.J."/>
            <person name="Bolanos R."/>
            <person name="Fasulo D."/>
            <person name="Halldorsson B.V."/>
            <person name="Hannenhalli S."/>
            <person name="Turner R."/>
            <person name="Yooseph S."/>
            <person name="Lu F."/>
            <person name="Nusskern D.R."/>
            <person name="Shue B.C."/>
            <person name="Zheng X.H."/>
            <person name="Zhong F."/>
            <person name="Delcher A.L."/>
            <person name="Huson D.H."/>
            <person name="Kravitz S.A."/>
            <person name="Mouchard L."/>
            <person name="Reinert K."/>
            <person name="Remington K.A."/>
            <person name="Clark A.G."/>
            <person name="Waterman M.S."/>
            <person name="Eichler E.E."/>
            <person name="Adams M.D."/>
            <person name="Hunkapiller M.W."/>
            <person name="Myers E.W."/>
            <person name="Venter J.C."/>
        </authorList>
    </citation>
    <scope>NUCLEOTIDE SEQUENCE [LARGE SCALE GENOMIC DNA]</scope>
</reference>
<reference key="7">
    <citation type="journal article" date="2004" name="Genome Res.">
        <title>The status, quality, and expansion of the NIH full-length cDNA project: the Mammalian Gene Collection (MGC).</title>
        <authorList>
            <consortium name="The MGC Project Team"/>
        </authorList>
    </citation>
    <scope>NUCLEOTIDE SEQUENCE [LARGE SCALE MRNA]</scope>
    <scope>VARIANT VAL-307</scope>
    <source>
        <tissue>Placenta</tissue>
    </source>
</reference>
<reference key="8">
    <citation type="journal article" date="1999" name="J. Virol.">
        <title>An orphan G protein-coupled receptor, GPR1, acts as a coreceptor to allow replication of human immunodeficiency virus types 1 and 2 in brain-derived cells.</title>
        <authorList>
            <person name="Shimizu N."/>
            <person name="Soda Y."/>
            <person name="Kanbe K."/>
            <person name="Liu H.Y."/>
            <person name="Jinno A."/>
            <person name="Kitamura T."/>
            <person name="Hoshino H."/>
        </authorList>
    </citation>
    <scope>FUNCTION (MICROBIAL INFECTION)</scope>
</reference>
<reference key="9">
    <citation type="journal article" date="2008" name="Proc. Natl. Acad. Sci. U.S.A.">
        <title>The genetic design of signaling cascades to record receptor activation.</title>
        <authorList>
            <person name="Barnea G."/>
            <person name="Strapps W."/>
            <person name="Herrada G."/>
            <person name="Berman Y."/>
            <person name="Ong J."/>
            <person name="Kloss B."/>
            <person name="Axel R."/>
            <person name="Lee K.J."/>
        </authorList>
    </citation>
    <scope>LIGAND-BINDING</scope>
    <scope>FUNCTION</scope>
</reference>
<reference key="10">
    <citation type="journal article" date="2016" name="PLoS ONE">
        <title>Signaling properties of chemerin receptors CMKLR1, GPR1 and CCRL2.</title>
        <authorList>
            <person name="De Henau O."/>
            <person name="Degroot G.N."/>
            <person name="Imbault V."/>
            <person name="Robert V."/>
            <person name="De Poorter C."/>
            <person name="Mcheik S."/>
            <person name="Gales C."/>
            <person name="Parmentier M."/>
            <person name="Springael J.Y."/>
        </authorList>
    </citation>
    <scope>FUNCTION</scope>
    <scope>SUBCELLULAR LOCATION</scope>
</reference>
<reference key="11">
    <citation type="journal article" date="2018" name="Pharmacol. Rev.">
        <title>International Union of Basic and Clinical Pharmacology CIII: Chemerin Receptors CMKLR1 (Chemerin1) and GPR1 (Chemerin2) Nomenclature, Pharmacology, and Function.</title>
        <authorList>
            <person name="Kennedy A.J."/>
            <person name="Davenport A.P."/>
        </authorList>
    </citation>
    <scope>NOMENCLATURE</scope>
</reference>
<name>CML2_HUMAN</name>